<comment type="function">
    <text evidence="1">The glycine cleavage system catalyzes the degradation of glycine. The H protein shuttles the methylamine group of glycine from the P protein to the T protein.</text>
</comment>
<comment type="cofactor">
    <cofactor evidence="1">
        <name>(R)-lipoate</name>
        <dbReference type="ChEBI" id="CHEBI:83088"/>
    </cofactor>
    <text evidence="1">Binds 1 lipoyl cofactor covalently.</text>
</comment>
<comment type="subunit">
    <text evidence="1">The glycine cleavage system is composed of four proteins: P, T, L and H.</text>
</comment>
<comment type="similarity">
    <text evidence="1">Belongs to the GcvH family.</text>
</comment>
<reference key="1">
    <citation type="journal article" date="2007" name="PLoS Genet.">
        <title>Patterns and implications of gene gain and loss in the evolution of Prochlorococcus.</title>
        <authorList>
            <person name="Kettler G.C."/>
            <person name="Martiny A.C."/>
            <person name="Huang K."/>
            <person name="Zucker J."/>
            <person name="Coleman M.L."/>
            <person name="Rodrigue S."/>
            <person name="Chen F."/>
            <person name="Lapidus A."/>
            <person name="Ferriera S."/>
            <person name="Johnson J."/>
            <person name="Steglich C."/>
            <person name="Church G.M."/>
            <person name="Richardson P."/>
            <person name="Chisholm S.W."/>
        </authorList>
    </citation>
    <scope>NUCLEOTIDE SEQUENCE [LARGE SCALE GENOMIC DNA]</scope>
    <source>
        <strain>AS9601</strain>
    </source>
</reference>
<accession>A2BTQ0</accession>
<name>GCSH_PROMS</name>
<protein>
    <recommendedName>
        <fullName evidence="1">Glycine cleavage system H protein</fullName>
    </recommendedName>
</protein>
<organism>
    <name type="scientific">Prochlorococcus marinus (strain AS9601)</name>
    <dbReference type="NCBI Taxonomy" id="146891"/>
    <lineage>
        <taxon>Bacteria</taxon>
        <taxon>Bacillati</taxon>
        <taxon>Cyanobacteriota</taxon>
        <taxon>Cyanophyceae</taxon>
        <taxon>Synechococcales</taxon>
        <taxon>Prochlorococcaceae</taxon>
        <taxon>Prochlorococcus</taxon>
    </lineage>
</organism>
<gene>
    <name evidence="1" type="primary">gcvH</name>
    <name type="ordered locus">A9601_18781</name>
</gene>
<dbReference type="EMBL" id="CP000551">
    <property type="protein sequence ID" value="ABM71161.1"/>
    <property type="molecule type" value="Genomic_DNA"/>
</dbReference>
<dbReference type="RefSeq" id="WP_011819279.1">
    <property type="nucleotide sequence ID" value="NC_008816.1"/>
</dbReference>
<dbReference type="SMR" id="A2BTQ0"/>
<dbReference type="STRING" id="146891.A9601_18781"/>
<dbReference type="KEGG" id="pmb:A9601_18781"/>
<dbReference type="eggNOG" id="COG0509">
    <property type="taxonomic scope" value="Bacteria"/>
</dbReference>
<dbReference type="HOGENOM" id="CLU_097408_2_0_3"/>
<dbReference type="OrthoDB" id="9796712at2"/>
<dbReference type="Proteomes" id="UP000002590">
    <property type="component" value="Chromosome"/>
</dbReference>
<dbReference type="GO" id="GO:0005829">
    <property type="term" value="C:cytosol"/>
    <property type="evidence" value="ECO:0007669"/>
    <property type="project" value="TreeGrafter"/>
</dbReference>
<dbReference type="GO" id="GO:0005960">
    <property type="term" value="C:glycine cleavage complex"/>
    <property type="evidence" value="ECO:0007669"/>
    <property type="project" value="InterPro"/>
</dbReference>
<dbReference type="GO" id="GO:0019464">
    <property type="term" value="P:glycine decarboxylation via glycine cleavage system"/>
    <property type="evidence" value="ECO:0007669"/>
    <property type="project" value="UniProtKB-UniRule"/>
</dbReference>
<dbReference type="CDD" id="cd06848">
    <property type="entry name" value="GCS_H"/>
    <property type="match status" value="1"/>
</dbReference>
<dbReference type="Gene3D" id="2.40.50.100">
    <property type="match status" value="1"/>
</dbReference>
<dbReference type="HAMAP" id="MF_00272">
    <property type="entry name" value="GcvH"/>
    <property type="match status" value="1"/>
</dbReference>
<dbReference type="InterPro" id="IPR003016">
    <property type="entry name" value="2-oxoA_DH_lipoyl-BS"/>
</dbReference>
<dbReference type="InterPro" id="IPR000089">
    <property type="entry name" value="Biotin_lipoyl"/>
</dbReference>
<dbReference type="InterPro" id="IPR002930">
    <property type="entry name" value="GCV_H"/>
</dbReference>
<dbReference type="InterPro" id="IPR033753">
    <property type="entry name" value="GCV_H/Fam206"/>
</dbReference>
<dbReference type="InterPro" id="IPR017453">
    <property type="entry name" value="GCV_H_sub"/>
</dbReference>
<dbReference type="InterPro" id="IPR011053">
    <property type="entry name" value="Single_hybrid_motif"/>
</dbReference>
<dbReference type="NCBIfam" id="TIGR00527">
    <property type="entry name" value="gcvH"/>
    <property type="match status" value="1"/>
</dbReference>
<dbReference type="NCBIfam" id="NF002270">
    <property type="entry name" value="PRK01202.1"/>
    <property type="match status" value="1"/>
</dbReference>
<dbReference type="PANTHER" id="PTHR11715">
    <property type="entry name" value="GLYCINE CLEAVAGE SYSTEM H PROTEIN"/>
    <property type="match status" value="1"/>
</dbReference>
<dbReference type="PANTHER" id="PTHR11715:SF3">
    <property type="entry name" value="GLYCINE CLEAVAGE SYSTEM H PROTEIN-RELATED"/>
    <property type="match status" value="1"/>
</dbReference>
<dbReference type="Pfam" id="PF01597">
    <property type="entry name" value="GCV_H"/>
    <property type="match status" value="1"/>
</dbReference>
<dbReference type="SUPFAM" id="SSF51230">
    <property type="entry name" value="Single hybrid motif"/>
    <property type="match status" value="1"/>
</dbReference>
<dbReference type="PROSITE" id="PS50968">
    <property type="entry name" value="BIOTINYL_LIPOYL"/>
    <property type="match status" value="1"/>
</dbReference>
<dbReference type="PROSITE" id="PS00189">
    <property type="entry name" value="LIPOYL"/>
    <property type="match status" value="1"/>
</dbReference>
<keyword id="KW-0450">Lipoyl</keyword>
<feature type="chain" id="PRO_0000302410" description="Glycine cleavage system H protein">
    <location>
        <begin position="1"/>
        <end position="129"/>
    </location>
</feature>
<feature type="domain" description="Lipoyl-binding" evidence="2">
    <location>
        <begin position="24"/>
        <end position="106"/>
    </location>
</feature>
<feature type="modified residue" description="N6-lipoyllysine" evidence="1">
    <location>
        <position position="65"/>
    </location>
</feature>
<evidence type="ECO:0000255" key="1">
    <source>
        <dbReference type="HAMAP-Rule" id="MF_00272"/>
    </source>
</evidence>
<evidence type="ECO:0000255" key="2">
    <source>
        <dbReference type="PROSITE-ProRule" id="PRU01066"/>
    </source>
</evidence>
<proteinExistence type="inferred from homology"/>
<sequence>MSYKFPDNLNYADTHEYVLEENGLLKIGVSEFAIDQLGDIVFVELADEGATLEKGETFGTIESVKAVEEVYLPFSGEIVSVNESVIENPELLQNDPIGEGWLVILKPESKASIADLMTSEEYQSKVVPK</sequence>